<organism>
    <name type="scientific">Xanthobacter autotrophicus (strain ATCC BAA-1158 / Py2)</name>
    <dbReference type="NCBI Taxonomy" id="78245"/>
    <lineage>
        <taxon>Bacteria</taxon>
        <taxon>Pseudomonadati</taxon>
        <taxon>Pseudomonadota</taxon>
        <taxon>Alphaproteobacteria</taxon>
        <taxon>Hyphomicrobiales</taxon>
        <taxon>Xanthobacteraceae</taxon>
        <taxon>Xanthobacter</taxon>
    </lineage>
</organism>
<gene>
    <name evidence="1" type="primary">cbbL</name>
    <name type="ordered locus">Xaut_1918</name>
</gene>
<dbReference type="EC" id="4.1.1.39" evidence="1"/>
<dbReference type="EMBL" id="CP000781">
    <property type="protein sequence ID" value="ABS67163.1"/>
    <property type="molecule type" value="Genomic_DNA"/>
</dbReference>
<dbReference type="SMR" id="A7IGM0"/>
<dbReference type="STRING" id="78245.Xaut_1918"/>
<dbReference type="KEGG" id="xau:Xaut_1918"/>
<dbReference type="eggNOG" id="COG1850">
    <property type="taxonomic scope" value="Bacteria"/>
</dbReference>
<dbReference type="HOGENOM" id="CLU_031450_2_0_5"/>
<dbReference type="OrthoDB" id="9764279at2"/>
<dbReference type="PhylomeDB" id="A7IGM0"/>
<dbReference type="Proteomes" id="UP000002417">
    <property type="component" value="Chromosome"/>
</dbReference>
<dbReference type="GO" id="GO:0000287">
    <property type="term" value="F:magnesium ion binding"/>
    <property type="evidence" value="ECO:0007669"/>
    <property type="project" value="UniProtKB-UniRule"/>
</dbReference>
<dbReference type="GO" id="GO:0004497">
    <property type="term" value="F:monooxygenase activity"/>
    <property type="evidence" value="ECO:0007669"/>
    <property type="project" value="UniProtKB-KW"/>
</dbReference>
<dbReference type="GO" id="GO:0016984">
    <property type="term" value="F:ribulose-bisphosphate carboxylase activity"/>
    <property type="evidence" value="ECO:0007669"/>
    <property type="project" value="UniProtKB-UniRule"/>
</dbReference>
<dbReference type="GO" id="GO:0019253">
    <property type="term" value="P:reductive pentose-phosphate cycle"/>
    <property type="evidence" value="ECO:0007669"/>
    <property type="project" value="UniProtKB-UniRule"/>
</dbReference>
<dbReference type="CDD" id="cd08212">
    <property type="entry name" value="RuBisCO_large_I"/>
    <property type="match status" value="1"/>
</dbReference>
<dbReference type="Gene3D" id="3.20.20.110">
    <property type="entry name" value="Ribulose bisphosphate carboxylase, large subunit, C-terminal domain"/>
    <property type="match status" value="1"/>
</dbReference>
<dbReference type="Gene3D" id="3.30.70.150">
    <property type="entry name" value="RuBisCO large subunit, N-terminal domain"/>
    <property type="match status" value="1"/>
</dbReference>
<dbReference type="HAMAP" id="MF_01338">
    <property type="entry name" value="RuBisCO_L_type1"/>
    <property type="match status" value="1"/>
</dbReference>
<dbReference type="InterPro" id="IPR033966">
    <property type="entry name" value="RuBisCO"/>
</dbReference>
<dbReference type="InterPro" id="IPR020878">
    <property type="entry name" value="RuBisCo_large_chain_AS"/>
</dbReference>
<dbReference type="InterPro" id="IPR000685">
    <property type="entry name" value="RuBisCO_lsu_C"/>
</dbReference>
<dbReference type="InterPro" id="IPR036376">
    <property type="entry name" value="RuBisCO_lsu_C_sf"/>
</dbReference>
<dbReference type="InterPro" id="IPR017443">
    <property type="entry name" value="RuBisCO_lsu_fd_N"/>
</dbReference>
<dbReference type="InterPro" id="IPR036422">
    <property type="entry name" value="RuBisCO_lsu_N_sf"/>
</dbReference>
<dbReference type="InterPro" id="IPR020888">
    <property type="entry name" value="RuBisCO_lsuI"/>
</dbReference>
<dbReference type="NCBIfam" id="NF003252">
    <property type="entry name" value="PRK04208.1"/>
    <property type="match status" value="1"/>
</dbReference>
<dbReference type="PANTHER" id="PTHR42704">
    <property type="entry name" value="RIBULOSE BISPHOSPHATE CARBOXYLASE"/>
    <property type="match status" value="1"/>
</dbReference>
<dbReference type="PANTHER" id="PTHR42704:SF17">
    <property type="entry name" value="RIBULOSE BISPHOSPHATE CARBOXYLASE LARGE CHAIN"/>
    <property type="match status" value="1"/>
</dbReference>
<dbReference type="Pfam" id="PF00016">
    <property type="entry name" value="RuBisCO_large"/>
    <property type="match status" value="1"/>
</dbReference>
<dbReference type="Pfam" id="PF02788">
    <property type="entry name" value="RuBisCO_large_N"/>
    <property type="match status" value="1"/>
</dbReference>
<dbReference type="SFLD" id="SFLDG01052">
    <property type="entry name" value="RuBisCO"/>
    <property type="match status" value="1"/>
</dbReference>
<dbReference type="SFLD" id="SFLDS00014">
    <property type="entry name" value="RuBisCO"/>
    <property type="match status" value="1"/>
</dbReference>
<dbReference type="SFLD" id="SFLDG00301">
    <property type="entry name" value="RuBisCO-like_proteins"/>
    <property type="match status" value="1"/>
</dbReference>
<dbReference type="SUPFAM" id="SSF51649">
    <property type="entry name" value="RuBisCo, C-terminal domain"/>
    <property type="match status" value="1"/>
</dbReference>
<dbReference type="SUPFAM" id="SSF54966">
    <property type="entry name" value="RuBisCO, large subunit, small (N-terminal) domain"/>
    <property type="match status" value="1"/>
</dbReference>
<dbReference type="PROSITE" id="PS00157">
    <property type="entry name" value="RUBISCO_LARGE"/>
    <property type="match status" value="1"/>
</dbReference>
<evidence type="ECO:0000255" key="1">
    <source>
        <dbReference type="HAMAP-Rule" id="MF_01338"/>
    </source>
</evidence>
<sequence>MGADAAIGQIKDAKKRYAAGVLKYAQMGYWDGDYQPKDTDVLALFRITPQDGVDAVEAAAAVAGESSTATWTVVWTDRLTAADMYRAKAYKVEPVPGQPGQYFCWVAYDLDLFEEGSIANLTASIIGNVFSFKPLKACRLEDMRLPVAYVKTFRGPPTGIVVERERLDKFGRPLLGATTKPKLGLSGKNYGRVVYEGLKGGLDFVKDDENINSQPFMHWRDRFLYCMEAVNKAQAETGEVKGHYLNITAGTMEEMYRRAEFAKELGSVVVMVDLIVGWTAIQSISNWCRENDVLLHMHRAGHGTYTRQKGHGISFRVIAKWLRLAGVDHLHTGTAVGKLEGDPMTVQGYYNVCRETVTKTDYTRGIFFDQDWAGLRKVMPVASGGIHAGQMHQLIDLFGEDVVLQFGGGTIGHPDGIQAGAIANRVALETMILARNEGRDIKNEGPEILIEAAKWCRPLRAALDTWGEVTFNYASTDTSDFVPTASVA</sequence>
<reference key="1">
    <citation type="submission" date="2007-07" db="EMBL/GenBank/DDBJ databases">
        <title>Complete sequence of chromosome of Xanthobacter autotrophicus Py2.</title>
        <authorList>
            <consortium name="US DOE Joint Genome Institute"/>
            <person name="Copeland A."/>
            <person name="Lucas S."/>
            <person name="Lapidus A."/>
            <person name="Barry K."/>
            <person name="Glavina del Rio T."/>
            <person name="Hammon N."/>
            <person name="Israni S."/>
            <person name="Dalin E."/>
            <person name="Tice H."/>
            <person name="Pitluck S."/>
            <person name="Sims D."/>
            <person name="Brettin T."/>
            <person name="Bruce D."/>
            <person name="Detter J.C."/>
            <person name="Han C."/>
            <person name="Tapia R."/>
            <person name="Brainard J."/>
            <person name="Schmutz J."/>
            <person name="Larimer F."/>
            <person name="Land M."/>
            <person name="Hauser L."/>
            <person name="Kyrpides N."/>
            <person name="Kim E."/>
            <person name="Ensigns S.A."/>
            <person name="Richardson P."/>
        </authorList>
    </citation>
    <scope>NUCLEOTIDE SEQUENCE [LARGE SCALE GENOMIC DNA]</scope>
    <source>
        <strain>ATCC BAA-1158 / Py2</strain>
    </source>
</reference>
<proteinExistence type="inferred from homology"/>
<keyword id="KW-0113">Calvin cycle</keyword>
<keyword id="KW-0120">Carbon dioxide fixation</keyword>
<keyword id="KW-0456">Lyase</keyword>
<keyword id="KW-0460">Magnesium</keyword>
<keyword id="KW-0479">Metal-binding</keyword>
<keyword id="KW-0503">Monooxygenase</keyword>
<keyword id="KW-0560">Oxidoreductase</keyword>
<keyword id="KW-1185">Reference proteome</keyword>
<accession>A7IGM0</accession>
<comment type="function">
    <text evidence="1">RuBisCO catalyzes two reactions: the carboxylation of D-ribulose 1,5-bisphosphate, the primary event in carbon dioxide fixation, as well as the oxidative fragmentation of the pentose substrate. Both reactions occur simultaneously and in competition at the same active site.</text>
</comment>
<comment type="catalytic activity">
    <reaction evidence="1">
        <text>2 (2R)-3-phosphoglycerate + 2 H(+) = D-ribulose 1,5-bisphosphate + CO2 + H2O</text>
        <dbReference type="Rhea" id="RHEA:23124"/>
        <dbReference type="ChEBI" id="CHEBI:15377"/>
        <dbReference type="ChEBI" id="CHEBI:15378"/>
        <dbReference type="ChEBI" id="CHEBI:16526"/>
        <dbReference type="ChEBI" id="CHEBI:57870"/>
        <dbReference type="ChEBI" id="CHEBI:58272"/>
        <dbReference type="EC" id="4.1.1.39"/>
    </reaction>
</comment>
<comment type="catalytic activity">
    <reaction evidence="1">
        <text>D-ribulose 1,5-bisphosphate + O2 = 2-phosphoglycolate + (2R)-3-phosphoglycerate + 2 H(+)</text>
        <dbReference type="Rhea" id="RHEA:36631"/>
        <dbReference type="ChEBI" id="CHEBI:15378"/>
        <dbReference type="ChEBI" id="CHEBI:15379"/>
        <dbReference type="ChEBI" id="CHEBI:57870"/>
        <dbReference type="ChEBI" id="CHEBI:58033"/>
        <dbReference type="ChEBI" id="CHEBI:58272"/>
    </reaction>
</comment>
<comment type="cofactor">
    <cofactor evidence="1">
        <name>Mg(2+)</name>
        <dbReference type="ChEBI" id="CHEBI:18420"/>
    </cofactor>
    <text evidence="1">Binds 1 Mg(2+) ion per subunit.</text>
</comment>
<comment type="subunit">
    <text evidence="1">Heterohexadecamer of 8 large chains and 8 small chains.</text>
</comment>
<comment type="miscellaneous">
    <text evidence="1">The basic functional RuBisCO is composed of a large chain homodimer in a 'head-to-tail' conformation. In form I RuBisCO this homodimer is arranged in a barrel-like tetramer with the small subunits forming a tetrameric 'cap' on each end of the 'barrel'.</text>
</comment>
<comment type="similarity">
    <text evidence="1">Belongs to the RuBisCO large chain family. Type I subfamily.</text>
</comment>
<protein>
    <recommendedName>
        <fullName evidence="1">Ribulose bisphosphate carboxylase large chain</fullName>
        <shortName evidence="1">RuBisCO large subunit</shortName>
        <ecNumber evidence="1">4.1.1.39</ecNumber>
    </recommendedName>
</protein>
<name>RBL_XANP2</name>
<feature type="chain" id="PRO_1000142753" description="Ribulose bisphosphate carboxylase large chain">
    <location>
        <begin position="1"/>
        <end position="488"/>
    </location>
</feature>
<feature type="active site" description="Proton acceptor" evidence="1">
    <location>
        <position position="180"/>
    </location>
</feature>
<feature type="active site" description="Proton acceptor" evidence="1">
    <location>
        <position position="298"/>
    </location>
</feature>
<feature type="binding site" description="in homodimeric partner" evidence="1">
    <location>
        <position position="128"/>
    </location>
    <ligand>
        <name>substrate</name>
    </ligand>
</feature>
<feature type="binding site" evidence="1">
    <location>
        <position position="178"/>
    </location>
    <ligand>
        <name>substrate</name>
    </ligand>
</feature>
<feature type="binding site" evidence="1">
    <location>
        <position position="182"/>
    </location>
    <ligand>
        <name>substrate</name>
    </ligand>
</feature>
<feature type="binding site" description="via carbamate group" evidence="1">
    <location>
        <position position="206"/>
    </location>
    <ligand>
        <name>Mg(2+)</name>
        <dbReference type="ChEBI" id="CHEBI:18420"/>
    </ligand>
</feature>
<feature type="binding site" evidence="1">
    <location>
        <position position="208"/>
    </location>
    <ligand>
        <name>Mg(2+)</name>
        <dbReference type="ChEBI" id="CHEBI:18420"/>
    </ligand>
</feature>
<feature type="binding site" evidence="1">
    <location>
        <position position="209"/>
    </location>
    <ligand>
        <name>Mg(2+)</name>
        <dbReference type="ChEBI" id="CHEBI:18420"/>
    </ligand>
</feature>
<feature type="binding site" evidence="1">
    <location>
        <position position="299"/>
    </location>
    <ligand>
        <name>substrate</name>
    </ligand>
</feature>
<feature type="binding site" evidence="1">
    <location>
        <position position="331"/>
    </location>
    <ligand>
        <name>substrate</name>
    </ligand>
</feature>
<feature type="binding site" evidence="1">
    <location>
        <position position="383"/>
    </location>
    <ligand>
        <name>substrate</name>
    </ligand>
</feature>
<feature type="site" description="Transition state stabilizer" evidence="1">
    <location>
        <position position="338"/>
    </location>
</feature>
<feature type="modified residue" description="N6-carboxylysine" evidence="1">
    <location>
        <position position="206"/>
    </location>
</feature>